<gene>
    <name evidence="5" type="primary">chlE</name>
</gene>
<proteinExistence type="evidence at protein level"/>
<name>CHLE_ASPNG</name>
<comment type="function">
    <text evidence="4">Extracellular chlorogenic acid esterase that releases caffeic acid from chlorogenic acid (CGA) contained in natural substrates such as apple marc and coffee pulp (PubMed:17630312). Shows no activity towards 5-O-p-coumaroyl quinic acid, another quinic ester derivative, and rosmarinic acid, another caffeic ester derivative (PubMed:17630312).</text>
</comment>
<comment type="catalytic activity">
    <reaction evidence="4">
        <text>chlorogenate + H2O = L-quinate + (E)-caffeate + H(+)</text>
        <dbReference type="Rhea" id="RHEA:20689"/>
        <dbReference type="ChEBI" id="CHEBI:15377"/>
        <dbReference type="ChEBI" id="CHEBI:15378"/>
        <dbReference type="ChEBI" id="CHEBI:29751"/>
        <dbReference type="ChEBI" id="CHEBI:57644"/>
        <dbReference type="ChEBI" id="CHEBI:57770"/>
        <dbReference type="EC" id="3.1.1.42"/>
    </reaction>
    <physiologicalReaction direction="left-to-right" evidence="4">
        <dbReference type="Rhea" id="RHEA:20690"/>
    </physiologicalReaction>
</comment>
<comment type="biophysicochemical properties">
    <kinetics>
        <KM evidence="4">6.5 uM for chlorogenic acid</KM>
        <Vmax evidence="4">250.0 nmol/sec/mg enzyme towards chlorogenic acid</Vmax>
    </kinetics>
    <phDependence>
        <text evidence="5">Optimum pH is 6.0.</text>
    </phDependence>
    <temperatureDependence>
        <text evidence="5">Optimum temperature is 60 degrees Celsius.</text>
    </temperatureDependence>
</comment>
<comment type="subcellular location">
    <subcellularLocation>
        <location evidence="4">Secreted</location>
    </subcellularLocation>
</comment>
<comment type="similarity">
    <text evidence="6">Belongs to the type-B carboxylesterase/lipase family.</text>
</comment>
<feature type="signal peptide" evidence="2">
    <location>
        <begin position="1"/>
        <end position="18"/>
    </location>
</feature>
<feature type="chain" id="PRO_5005121924" description="Chlorogenic acid esterase">
    <location>
        <begin position="19"/>
        <end position="512"/>
    </location>
</feature>
<feature type="active site" description="Acyl-ester intermediate" evidence="1">
    <location>
        <position position="230"/>
    </location>
</feature>
<feature type="active site" description="Charge relay system" evidence="1">
    <location>
        <position position="351"/>
    </location>
</feature>
<feature type="active site" description="Charge relay system" evidence="1">
    <location>
        <position position="416"/>
    </location>
</feature>
<feature type="glycosylation site" description="N-linked (GlcNAc...) asparagine" evidence="3">
    <location>
        <position position="47"/>
    </location>
</feature>
<feature type="glycosylation site" description="N-linked (GlcNAc...) asparagine" evidence="3">
    <location>
        <position position="80"/>
    </location>
</feature>
<feature type="glycosylation site" description="N-linked (GlcNAc...) asparagine" evidence="3">
    <location>
        <position position="98"/>
    </location>
</feature>
<feature type="glycosylation site" description="N-linked (GlcNAc...) asparagine" evidence="3">
    <location>
        <position position="271"/>
    </location>
</feature>
<feature type="glycosylation site" description="N-linked (GlcNAc...) asparagine" evidence="3">
    <location>
        <position position="295"/>
    </location>
</feature>
<feature type="glycosylation site" description="N-linked (GlcNAc...) asparagine" evidence="3">
    <location>
        <position position="322"/>
    </location>
</feature>
<feature type="glycosylation site" description="N-linked (GlcNAc...) asparagine" evidence="3">
    <location>
        <position position="328"/>
    </location>
</feature>
<feature type="glycosylation site" description="N-linked (GlcNAc...) asparagine" evidence="3">
    <location>
        <position position="391"/>
    </location>
</feature>
<feature type="glycosylation site" description="N-linked (GlcNAc...) asparagine" evidence="3">
    <location>
        <position position="402"/>
    </location>
</feature>
<feature type="glycosylation site" description="N-linked (GlcNAc...) asparagine" evidence="3">
    <location>
        <position position="474"/>
    </location>
</feature>
<feature type="disulfide bond" evidence="1">
    <location>
        <begin position="92"/>
        <end position="120"/>
    </location>
</feature>
<feature type="disulfide bond" evidence="1">
    <location>
        <begin position="281"/>
        <end position="292"/>
    </location>
</feature>
<dbReference type="EC" id="3.1.1.42" evidence="4"/>
<dbReference type="EMBL" id="DQ993161">
    <property type="protein sequence ID" value="ABK62698.1"/>
    <property type="molecule type" value="Genomic_DNA"/>
</dbReference>
<dbReference type="SMR" id="A7YN26"/>
<dbReference type="ESTHER" id="aspnc-a2qn56">
    <property type="family name" value="Fungal_carboxylesterase_lipase"/>
</dbReference>
<dbReference type="GlyCosmos" id="A7YN26">
    <property type="glycosylation" value="10 sites, No reported glycans"/>
</dbReference>
<dbReference type="VEuPathDB" id="FungiDB:An07g04470"/>
<dbReference type="VEuPathDB" id="FungiDB:ASPNIDRAFT2_1184088"/>
<dbReference type="VEuPathDB" id="FungiDB:ATCC64974_46350"/>
<dbReference type="VEuPathDB" id="FungiDB:M747DRAFT_360378"/>
<dbReference type="BioCyc" id="MetaCyc:MONOMER-16433"/>
<dbReference type="BRENDA" id="3.1.1.42">
    <property type="organism ID" value="518"/>
</dbReference>
<dbReference type="GO" id="GO:0005576">
    <property type="term" value="C:extracellular region"/>
    <property type="evidence" value="ECO:0007669"/>
    <property type="project" value="UniProtKB-SubCell"/>
</dbReference>
<dbReference type="GO" id="GO:0047745">
    <property type="term" value="F:chlorogenate hydrolase activity"/>
    <property type="evidence" value="ECO:0007669"/>
    <property type="project" value="RHEA"/>
</dbReference>
<dbReference type="Gene3D" id="3.40.50.1820">
    <property type="entry name" value="alpha/beta hydrolase"/>
    <property type="match status" value="2"/>
</dbReference>
<dbReference type="InterPro" id="IPR029058">
    <property type="entry name" value="AB_hydrolase_fold"/>
</dbReference>
<dbReference type="InterPro" id="IPR050654">
    <property type="entry name" value="AChE-related_enzymes"/>
</dbReference>
<dbReference type="InterPro" id="IPR002018">
    <property type="entry name" value="CarbesteraseB"/>
</dbReference>
<dbReference type="InterPro" id="IPR019826">
    <property type="entry name" value="Carboxylesterase_B_AS"/>
</dbReference>
<dbReference type="InterPro" id="IPR019819">
    <property type="entry name" value="Carboxylesterase_B_CS"/>
</dbReference>
<dbReference type="PANTHER" id="PTHR43918">
    <property type="entry name" value="ACETYLCHOLINESTERASE"/>
    <property type="match status" value="1"/>
</dbReference>
<dbReference type="PANTHER" id="PTHR43918:SF4">
    <property type="entry name" value="CARBOXYLIC ESTER HYDROLASE"/>
    <property type="match status" value="1"/>
</dbReference>
<dbReference type="Pfam" id="PF00135">
    <property type="entry name" value="COesterase"/>
    <property type="match status" value="2"/>
</dbReference>
<dbReference type="SUPFAM" id="SSF53474">
    <property type="entry name" value="alpha/beta-Hydrolases"/>
    <property type="match status" value="1"/>
</dbReference>
<dbReference type="PROSITE" id="PS00122">
    <property type="entry name" value="CARBOXYLESTERASE_B_1"/>
    <property type="match status" value="1"/>
</dbReference>
<dbReference type="PROSITE" id="PS00941">
    <property type="entry name" value="CARBOXYLESTERASE_B_2"/>
    <property type="match status" value="1"/>
</dbReference>
<keyword id="KW-1015">Disulfide bond</keyword>
<keyword id="KW-0325">Glycoprotein</keyword>
<keyword id="KW-0378">Hydrolase</keyword>
<keyword id="KW-0964">Secreted</keyword>
<keyword id="KW-0732">Signal</keyword>
<protein>
    <recommendedName>
        <fullName evidence="5">Chlorogenic acid esterase</fullName>
        <ecNumber evidence="4">3.1.1.42</ecNumber>
    </recommendedName>
    <alternativeName>
        <fullName evidence="5">Chlorogenic acid hydrolase</fullName>
        <shortName evidence="5">CGA hydrolase</shortName>
    </alternativeName>
</protein>
<accession>A7YN26</accession>
<evidence type="ECO:0000250" key="1">
    <source>
        <dbReference type="UniProtKB" id="P21836"/>
    </source>
</evidence>
<evidence type="ECO:0000255" key="2"/>
<evidence type="ECO:0000255" key="3">
    <source>
        <dbReference type="PROSITE-ProRule" id="PRU00498"/>
    </source>
</evidence>
<evidence type="ECO:0000269" key="4">
    <source>
    </source>
</evidence>
<evidence type="ECO:0000303" key="5">
    <source>
    </source>
</evidence>
<evidence type="ECO:0000305" key="6"/>
<organism>
    <name type="scientific">Aspergillus niger</name>
    <dbReference type="NCBI Taxonomy" id="5061"/>
    <lineage>
        <taxon>Eukaryota</taxon>
        <taxon>Fungi</taxon>
        <taxon>Dikarya</taxon>
        <taxon>Ascomycota</taxon>
        <taxon>Pezizomycotina</taxon>
        <taxon>Eurotiomycetes</taxon>
        <taxon>Eurotiomycetidae</taxon>
        <taxon>Eurotiales</taxon>
        <taxon>Aspergillaceae</taxon>
        <taxon>Aspergillus</taxon>
        <taxon>Aspergillus subgen. Circumdati</taxon>
    </lineage>
</organism>
<sequence length="512" mass="55265">MLLRLCIIATLLVSHCVAVSTSPATRDTNGEGLLVQTSSGPIQGFFNQTAPDVRQWLGVPFAEPPVGDLRFSSPVKKQPNGTVNAFALPSSCIQQTSNSSTIYTTYETGFLISGGDSEDCLYLSIWAPRIENIQSQQRPLPVLLYIPGGGFTSGGEASLYKIPDKWVQRTQSHIVVIMNYRVNVFGFPNAEGLSEPNVGLLDQRMAVEWVAANIANFGGDPARIALWGQSAGAASVTAYSYGYPEDPIVAALIADSGAPNIVDNEDYAHTNFTFLASLVGCDGLSSTEELSCMRNVSARKLQTALSTYSGSPSISFTPAVDNKTFFANWTERAITGKVAKIPLITGSNTNEGAGFVSFTPAGPSKSTLFEITESIIACPVAEEVKNRNLANLTTYRYQYAGNFTNISPLPWFGAYHSAELPILFGTHYEYGGPSTQYEWDVSYAMQALWLSFVEDPTRGPVRLAVGNVPANPTNESYFAWPAFEQGSDDLLVFAEGGKVMQLVGAGRIDDYC</sequence>
<reference key="1">
    <citation type="journal article" date="2007" name="Appl. Environ. Microbiol.">
        <title>Gene overexpression and biochemical characterization of the biotechnologically relevant chlorogenic acid hydrolase from Aspergillus niger.</title>
        <authorList>
            <person name="Benoit I."/>
            <person name="Asther M."/>
            <person name="Bourne Y."/>
            <person name="Navarro D."/>
            <person name="Canaan S."/>
            <person name="Lesage-Meessen L."/>
            <person name="Herweijer M."/>
            <person name="Coutinho P.M."/>
            <person name="Asther M."/>
            <person name="Record E."/>
        </authorList>
    </citation>
    <scope>NUCLEOTIDE SEQUENCE [GENOMIC DNA]</scope>
    <scope>FUNCTION</scope>
    <scope>CATALYTIC ACTIVITY</scope>
    <scope>BIOPHYSICOCHEMICAL PROPERTIES</scope>
    <scope>SUBSTRATE SPECIFICITY</scope>
</reference>